<gene>
    <name type="primary">grdC</name>
</gene>
<keyword id="KW-0903">Direct protein sequencing</keyword>
<keyword id="KW-0560">Oxidoreductase</keyword>
<accession>P54935</accession>
<sequence length="513" mass="54458">MNFPVLKGAGYVLVHTPDMIMHNGTTQTTEKIVNPESEYLKKLPEHLRSFEDVVAYAPNQTYIGSMTPEALGEIAMPWWTEDKKVAGADRYGKLGEIMPQDEFLALMSASDVFDLVLFEKEFIEGAKAKLAAHPVVGNLAESVNAGVELAEIEKQLSEFHAEGLYNNGKLVGCVKRAHDVDVNLNSHTMLENLAVKASGVLALANLIAKNNVNPAEVDYIIECSEEACGDMNQRGGGNFAKALAEMTGCVNATGSDMRGFCAGPTHALIAAAALVKSGVYKNVIIAAGGATAKLGMNGKDHVKKEMPILEDCLGGFAVLVSENDGVNPILRTDLVGRHTVATGSAPQAVIGSLVLSPLKAGGLKITDVDKYSVEMQNPDITKPAGAGDVPEANYKMIAALAVMGKEIERADIAAFVEKHGMVGWAPTQGHIPSGVPYIGFAISDLTEGSVNRTMIVGKGSLFLGRMTNLFDGVSIVAERNTGKVESGSSVSTEEIRKMIAESMKDFAAHLLAE</sequence>
<protein>
    <recommendedName>
        <fullName>Glycine/sarcosine/betaine reductase complex component C subunit beta</fullName>
        <shortName>Protein PC beta</shortName>
        <ecNumber>1.21.4.2</ecNumber>
        <ecNumber>1.21.4.3</ecNumber>
        <ecNumber>1.21.4.4</ecNumber>
    </recommendedName>
</protein>
<name>GRDC_PEPAC</name>
<reference key="1">
    <citation type="submission" date="1996-05" db="EMBL/GenBank/DDBJ databases">
        <authorList>
            <person name="Luebbers M."/>
            <person name="Andreesen J.R."/>
        </authorList>
    </citation>
    <scope>NUCLEOTIDE SEQUENCE [GENOMIC DNA]</scope>
    <source>
        <strain>al-2 / ATCC 49065 / DSM 3953Z</strain>
    </source>
</reference>
<reference key="2">
    <citation type="journal article" date="1993" name="Eur. J. Biochem.">
        <title>Components of glycine reductase from Eubacterium acidaminophilum. Cloning, sequencing and identification of the genes for thioredoxin reductase, thioredoxin and selenoprotein PA.</title>
        <authorList>
            <person name="Luebbers M."/>
            <person name="Andreesen J.R."/>
        </authorList>
    </citation>
    <scope>NUCLEOTIDE SEQUENCE [GENOMIC DNA] OF 1-23</scope>
    <source>
        <strain>al-2 / ATCC 49065 / DSM 3953Z</strain>
    </source>
</reference>
<reference key="3">
    <citation type="journal article" date="1992" name="Eur. J. Biochem.">
        <title>Purification and characterization of protein PC, a component of glycine reductase from Eubacterium acidaminophilum.</title>
        <authorList>
            <person name="Schraeder T."/>
            <person name="Andreesen J.R."/>
        </authorList>
    </citation>
    <scope>PROTEIN SEQUENCE OF 1-23</scope>
    <source>
        <strain>al-2 / ATCC 49065 / DSM 3953Z</strain>
    </source>
</reference>
<dbReference type="EC" id="1.21.4.2"/>
<dbReference type="EC" id="1.21.4.3"/>
<dbReference type="EC" id="1.21.4.4"/>
<dbReference type="EMBL" id="L04500">
    <property type="protein sequence ID" value="AAB93306.1"/>
    <property type="molecule type" value="Genomic_DNA"/>
</dbReference>
<dbReference type="PIR" id="S38991">
    <property type="entry name" value="S38991"/>
</dbReference>
<dbReference type="SMR" id="P54935"/>
<dbReference type="BioCyc" id="MetaCyc:MONOMER-20604"/>
<dbReference type="GO" id="GO:0004315">
    <property type="term" value="F:3-oxoacyl-[acyl-carrier-protein] synthase activity"/>
    <property type="evidence" value="ECO:0007669"/>
    <property type="project" value="InterPro"/>
</dbReference>
<dbReference type="GO" id="GO:0033795">
    <property type="term" value="F:betaine reductase activity"/>
    <property type="evidence" value="ECO:0007669"/>
    <property type="project" value="UniProtKB-EC"/>
</dbReference>
<dbReference type="GO" id="GO:0030699">
    <property type="term" value="F:glycine reductase activity"/>
    <property type="evidence" value="ECO:0007669"/>
    <property type="project" value="UniProtKB-EC"/>
</dbReference>
<dbReference type="GO" id="GO:0033794">
    <property type="term" value="F:sarcosine reductase activity"/>
    <property type="evidence" value="ECO:0007669"/>
    <property type="project" value="UniProtKB-EC"/>
</dbReference>
<dbReference type="GO" id="GO:0006633">
    <property type="term" value="P:fatty acid biosynthetic process"/>
    <property type="evidence" value="ECO:0007669"/>
    <property type="project" value="InterPro"/>
</dbReference>
<dbReference type="CDD" id="cd00827">
    <property type="entry name" value="init_cond_enzymes"/>
    <property type="match status" value="1"/>
</dbReference>
<dbReference type="Gene3D" id="3.40.47.10">
    <property type="match status" value="1"/>
</dbReference>
<dbReference type="InterPro" id="IPR013751">
    <property type="entry name" value="ACP_syn_III_N"/>
</dbReference>
<dbReference type="InterPro" id="IPR045984">
    <property type="entry name" value="DUF5940"/>
</dbReference>
<dbReference type="InterPro" id="IPR017236">
    <property type="entry name" value="Gly/sarc/bet/_Rdtase_C_bsu"/>
</dbReference>
<dbReference type="InterPro" id="IPR016039">
    <property type="entry name" value="Thiolase-like"/>
</dbReference>
<dbReference type="NCBIfam" id="NF040746">
    <property type="entry name" value="reduct_C_beta"/>
    <property type="match status" value="1"/>
</dbReference>
<dbReference type="Pfam" id="PF08545">
    <property type="entry name" value="ACP_syn_III"/>
    <property type="match status" value="1"/>
</dbReference>
<dbReference type="Pfam" id="PF19364">
    <property type="entry name" value="DUF5940"/>
    <property type="match status" value="1"/>
</dbReference>
<dbReference type="PIRSF" id="PIRSF037559">
    <property type="entry name" value="Gly_sarc_betain_red_a"/>
    <property type="match status" value="1"/>
</dbReference>
<dbReference type="SUPFAM" id="SSF53901">
    <property type="entry name" value="Thiolase-like"/>
    <property type="match status" value="1"/>
</dbReference>
<feature type="chain" id="PRO_0000087601" description="Glycine/sarcosine/betaine reductase complex component C subunit beta">
    <location>
        <begin position="1"/>
        <end position="513"/>
    </location>
</feature>
<organism>
    <name type="scientific">Peptoclostridium acidaminophilum</name>
    <name type="common">Eubacterium acidaminophilum</name>
    <dbReference type="NCBI Taxonomy" id="1731"/>
    <lineage>
        <taxon>Bacteria</taxon>
        <taxon>Bacillati</taxon>
        <taxon>Bacillota</taxon>
        <taxon>Clostridia</taxon>
        <taxon>Peptostreptococcales</taxon>
        <taxon>Peptoclostridiaceae</taxon>
        <taxon>Peptoclostridium</taxon>
    </lineage>
</organism>
<comment type="function">
    <text>In the first step of glycine, betaine and sarcosine reductases, the substrate is bound to component PB via a Schiff base intermediate. Then the PB-activated substrate is nucleophilically attacked by the selenol anion of component PA to transform it to a carboxymethylated selenoether and the respective amine. By action of component PC, acetyl phosphate is formed, leaving component PA in its oxidized state. Finally component PA becomes reduced by the thioredoxin system to start a new catalytic cycle of reductive deamination.</text>
</comment>
<comment type="catalytic activity">
    <reaction>
        <text>acetyl phosphate + [thioredoxin]-disulfide + NH4(+) + H2O = [thioredoxin]-dithiol + glycine + phosphate + H(+)</text>
        <dbReference type="Rhea" id="RHEA:12232"/>
        <dbReference type="Rhea" id="RHEA-COMP:10698"/>
        <dbReference type="Rhea" id="RHEA-COMP:10700"/>
        <dbReference type="ChEBI" id="CHEBI:15377"/>
        <dbReference type="ChEBI" id="CHEBI:15378"/>
        <dbReference type="ChEBI" id="CHEBI:22191"/>
        <dbReference type="ChEBI" id="CHEBI:28938"/>
        <dbReference type="ChEBI" id="CHEBI:29950"/>
        <dbReference type="ChEBI" id="CHEBI:43474"/>
        <dbReference type="ChEBI" id="CHEBI:50058"/>
        <dbReference type="ChEBI" id="CHEBI:57305"/>
        <dbReference type="EC" id="1.21.4.2"/>
    </reaction>
</comment>
<comment type="catalytic activity">
    <reaction>
        <text>acetyl phosphate + methylamine + [thioredoxin]-disulfide + H2O = sarcosine + [thioredoxin]-dithiol + phosphate + H(+)</text>
        <dbReference type="Rhea" id="RHEA:12825"/>
        <dbReference type="Rhea" id="RHEA-COMP:10698"/>
        <dbReference type="Rhea" id="RHEA-COMP:10700"/>
        <dbReference type="ChEBI" id="CHEBI:15377"/>
        <dbReference type="ChEBI" id="CHEBI:15378"/>
        <dbReference type="ChEBI" id="CHEBI:22191"/>
        <dbReference type="ChEBI" id="CHEBI:29950"/>
        <dbReference type="ChEBI" id="CHEBI:43474"/>
        <dbReference type="ChEBI" id="CHEBI:50058"/>
        <dbReference type="ChEBI" id="CHEBI:57433"/>
        <dbReference type="ChEBI" id="CHEBI:59338"/>
        <dbReference type="EC" id="1.21.4.3"/>
    </reaction>
</comment>
<comment type="catalytic activity">
    <reaction>
        <text>acetyl phosphate + trimethylamine + [thioredoxin]-disulfide + H2O = glycine betaine + [thioredoxin]-dithiol + phosphate + H(+)</text>
        <dbReference type="Rhea" id="RHEA:11848"/>
        <dbReference type="Rhea" id="RHEA-COMP:10698"/>
        <dbReference type="Rhea" id="RHEA-COMP:10700"/>
        <dbReference type="ChEBI" id="CHEBI:15377"/>
        <dbReference type="ChEBI" id="CHEBI:15378"/>
        <dbReference type="ChEBI" id="CHEBI:17750"/>
        <dbReference type="ChEBI" id="CHEBI:22191"/>
        <dbReference type="ChEBI" id="CHEBI:29950"/>
        <dbReference type="ChEBI" id="CHEBI:43474"/>
        <dbReference type="ChEBI" id="CHEBI:50058"/>
        <dbReference type="ChEBI" id="CHEBI:58389"/>
        <dbReference type="EC" id="1.21.4.4"/>
    </reaction>
</comment>
<comment type="subunit">
    <text>Heterooctamer of four alpha and four beta subunits. Component of the glycine, sarcosine and betaine reductase complexes, together with proteins A and B.</text>
</comment>
<proteinExistence type="evidence at protein level"/>